<proteinExistence type="evidence at protein level"/>
<evidence type="ECO:0000250" key="1"/>
<evidence type="ECO:0000255" key="2"/>
<evidence type="ECO:0000269" key="3">
    <source>
    </source>
</evidence>
<evidence type="ECO:0000305" key="4"/>
<accession>O00526</accession>
<accession>B0YJ92</accession>
<accession>O00457</accession>
<accession>Q53YV0</accession>
<name>UPK2_HUMAN</name>
<gene>
    <name type="primary">UPK2</name>
</gene>
<organism>
    <name type="scientific">Homo sapiens</name>
    <name type="common">Human</name>
    <dbReference type="NCBI Taxonomy" id="9606"/>
    <lineage>
        <taxon>Eukaryota</taxon>
        <taxon>Metazoa</taxon>
        <taxon>Chordata</taxon>
        <taxon>Craniata</taxon>
        <taxon>Vertebrata</taxon>
        <taxon>Euteleostomi</taxon>
        <taxon>Mammalia</taxon>
        <taxon>Eutheria</taxon>
        <taxon>Euarchontoglires</taxon>
        <taxon>Primates</taxon>
        <taxon>Haplorrhini</taxon>
        <taxon>Catarrhini</taxon>
        <taxon>Hominidae</taxon>
        <taxon>Homo</taxon>
    </lineage>
</organism>
<keyword id="KW-1003">Cell membrane</keyword>
<keyword id="KW-0165">Cleavage on pair of basic residues</keyword>
<keyword id="KW-0325">Glycoprotein</keyword>
<keyword id="KW-0472">Membrane</keyword>
<keyword id="KW-1267">Proteomics identification</keyword>
<keyword id="KW-1185">Reference proteome</keyword>
<keyword id="KW-0732">Signal</keyword>
<keyword id="KW-0812">Transmembrane</keyword>
<keyword id="KW-1133">Transmembrane helix</keyword>
<comment type="function">
    <text evidence="1">Component of the asymmetric unit membrane (AUM); a highly specialized biomembrane elaborated by terminally differentiated urothelial cells. May play an important role in regulating the assembly of the AUM (By similarity).</text>
</comment>
<comment type="subunit">
    <text evidence="1">Interacts with uroplakin-1a (UPK1A).</text>
</comment>
<comment type="interaction">
    <interactant intactId="EBI-10179682">
        <id>O00526</id>
    </interactant>
    <interactant intactId="EBI-17979264">
        <id>Q86Y34</id>
        <label>ADGRG3</label>
    </interactant>
    <organismsDiffer>false</organismsDiffer>
    <experiments>3</experiments>
</comment>
<comment type="interaction">
    <interactant intactId="EBI-10179682">
        <id>O00526</id>
    </interactant>
    <interactant intactId="EBI-19125216">
        <id>Q86WK6</id>
        <label>AMIGO1</label>
    </interactant>
    <organismsDiffer>false</organismsDiffer>
    <experiments>3</experiments>
</comment>
<comment type="interaction">
    <interactant intactId="EBI-10179682">
        <id>O00526</id>
    </interactant>
    <interactant intactId="EBI-12808270">
        <id>P07307-3</id>
        <label>ASGR2</label>
    </interactant>
    <organismsDiffer>false</organismsDiffer>
    <experiments>3</experiments>
</comment>
<comment type="interaction">
    <interactant intactId="EBI-10179682">
        <id>O00526</id>
    </interactant>
    <interactant intactId="EBI-2512037">
        <id>O75787</id>
        <label>ATP6AP2</label>
    </interactant>
    <organismsDiffer>false</organismsDiffer>
    <experiments>3</experiments>
</comment>
<comment type="interaction">
    <interactant intactId="EBI-10179682">
        <id>O00526</id>
    </interactant>
    <interactant intactId="EBI-11532900">
        <id>J3KQ12</id>
        <label>BSCL2</label>
    </interactant>
    <organismsDiffer>false</organismsDiffer>
    <experiments>3</experiments>
</comment>
<comment type="interaction">
    <interactant intactId="EBI-10179682">
        <id>O00526</id>
    </interactant>
    <interactant intactId="EBI-17953245">
        <id>Q6UXG8-3</id>
        <label>BTNL9</label>
    </interactant>
    <organismsDiffer>false</organismsDiffer>
    <experiments>3</experiments>
</comment>
<comment type="interaction">
    <interactant intactId="EBI-10179682">
        <id>O00526</id>
    </interactant>
    <interactant intactId="EBI-12222807">
        <id>P04233-2</id>
        <label>CD74</label>
    </interactant>
    <organismsDiffer>false</organismsDiffer>
    <experiments>4</experiments>
</comment>
<comment type="interaction">
    <interactant intactId="EBI-10179682">
        <id>O00526</id>
    </interactant>
    <interactant intactId="EBI-740744">
        <id>O95471</id>
        <label>CLDN7</label>
    </interactant>
    <organismsDiffer>false</organismsDiffer>
    <experiments>3</experiments>
</comment>
<comment type="interaction">
    <interactant intactId="EBI-10179682">
        <id>O00526</id>
    </interactant>
    <interactant intactId="EBI-11977093">
        <id>Q6ZS10</id>
        <label>CLEC17A</label>
    </interactant>
    <organismsDiffer>false</organismsDiffer>
    <experiments>3</experiments>
</comment>
<comment type="interaction">
    <interactant intactId="EBI-10179682">
        <id>O00526</id>
    </interactant>
    <interactant intactId="EBI-11989440">
        <id>Q9BXN2-6</id>
        <label>CLEC7A</label>
    </interactant>
    <organismsDiffer>false</organismsDiffer>
    <experiments>3</experiments>
</comment>
<comment type="interaction">
    <interactant intactId="EBI-10179682">
        <id>O00526</id>
    </interactant>
    <interactant intactId="EBI-2869867">
        <id>P12314</id>
        <label>FCGR1A</label>
    </interactant>
    <organismsDiffer>false</organismsDiffer>
    <experiments>3</experiments>
</comment>
<comment type="interaction">
    <interactant intactId="EBI-10179682">
        <id>O00526</id>
    </interactant>
    <interactant intactId="EBI-17187481">
        <id>P12318-2</id>
        <label>FCGR2A</label>
    </interactant>
    <organismsDiffer>false</organismsDiffer>
    <experiments>3</experiments>
</comment>
<comment type="interaction">
    <interactant intactId="EBI-10179682">
        <id>O00526</id>
    </interactant>
    <interactant intactId="EBI-2833934">
        <id>P55899</id>
        <label>FCGRT</label>
    </interactant>
    <organismsDiffer>false</organismsDiffer>
    <experiments>3</experiments>
</comment>
<comment type="interaction">
    <interactant intactId="EBI-10179682">
        <id>O00526</id>
    </interactant>
    <interactant intactId="EBI-12142257">
        <id>Q8TBE3</id>
        <label>FNDC9</label>
    </interactant>
    <organismsDiffer>false</organismsDiffer>
    <experiments>3</experiments>
</comment>
<comment type="interaction">
    <interactant intactId="EBI-10179682">
        <id>O00526</id>
    </interactant>
    <interactant intactId="EBI-4289554">
        <id>Q99795</id>
        <label>GPA33</label>
    </interactant>
    <organismsDiffer>false</organismsDiffer>
    <experiments>3</experiments>
</comment>
<comment type="interaction">
    <interactant intactId="EBI-10179682">
        <id>O00526</id>
    </interactant>
    <interactant intactId="EBI-12816745">
        <id>P05981</id>
        <label>HPN</label>
    </interactant>
    <organismsDiffer>false</organismsDiffer>
    <experiments>3</experiments>
</comment>
<comment type="interaction">
    <interactant intactId="EBI-10179682">
        <id>O00526</id>
    </interactant>
    <interactant intactId="EBI-12811565">
        <id>Q9NQX7-3</id>
        <label>ITM2C</label>
    </interactant>
    <organismsDiffer>false</organismsDiffer>
    <experiments>3</experiments>
</comment>
<comment type="interaction">
    <interactant intactId="EBI-10179682">
        <id>O00526</id>
    </interactant>
    <interactant intactId="EBI-749265">
        <id>Q8N6L0</id>
        <label>KASH5</label>
    </interactant>
    <organismsDiffer>false</organismsDiffer>
    <experiments>3</experiments>
</comment>
<comment type="interaction">
    <interactant intactId="EBI-10179682">
        <id>O00526</id>
    </interactant>
    <interactant intactId="EBI-8632435">
        <id>P43628</id>
        <label>KIR2DL3</label>
    </interactant>
    <organismsDiffer>false</organismsDiffer>
    <experiments>3</experiments>
</comment>
<comment type="interaction">
    <interactant intactId="EBI-10179682">
        <id>O00526</id>
    </interactant>
    <interactant intactId="EBI-17272405">
        <id>Q8N743</id>
        <label>KIR3DL3</label>
    </interactant>
    <organismsDiffer>false</organismsDiffer>
    <experiments>3</experiments>
</comment>
<comment type="interaction">
    <interactant intactId="EBI-10179682">
        <id>O00526</id>
    </interactant>
    <interactant intactId="EBI-2830566">
        <id>Q9H400</id>
        <label>LIME1</label>
    </interactant>
    <organismsDiffer>false</organismsDiffer>
    <experiments>3</experiments>
</comment>
<comment type="interaction">
    <interactant intactId="EBI-10179682">
        <id>O00526</id>
    </interactant>
    <interactant intactId="EBI-12188331">
        <id>P60201-2</id>
        <label>PLP1</label>
    </interactant>
    <organismsDiffer>false</organismsDiffer>
    <experiments>3</experiments>
</comment>
<comment type="interaction">
    <interactant intactId="EBI-10179682">
        <id>O00526</id>
    </interactant>
    <interactant intactId="EBI-12055631">
        <id>Q96K19-5</id>
        <label>RNF170</label>
    </interactant>
    <organismsDiffer>false</organismsDiffer>
    <experiments>3</experiments>
</comment>
<comment type="interaction">
    <interactant intactId="EBI-10179682">
        <id>O00526</id>
    </interactant>
    <interactant intactId="EBI-12081840">
        <id>A1A5C7-2</id>
        <label>SLC22A23</label>
    </interactant>
    <organismsDiffer>false</organismsDiffer>
    <experiments>3</experiments>
</comment>
<comment type="interaction">
    <interactant intactId="EBI-10179682">
        <id>O00526</id>
    </interactant>
    <interactant intactId="EBI-10226799">
        <id>Q0VAQ4</id>
        <label>SMAGP</label>
    </interactant>
    <organismsDiffer>false</organismsDiffer>
    <experiments>3</experiments>
</comment>
<comment type="interaction">
    <interactant intactId="EBI-10179682">
        <id>O00526</id>
    </interactant>
    <interactant intactId="EBI-12900395">
        <id>Q8TAV4</id>
        <label>STOML3</label>
    </interactant>
    <organismsDiffer>false</organismsDiffer>
    <experiments>3</experiments>
</comment>
<comment type="interaction">
    <interactant intactId="EBI-10179682">
        <id>O00526</id>
    </interactant>
    <interactant intactId="EBI-2821497">
        <id>Q9BVX2</id>
        <label>TMEM106C</label>
    </interactant>
    <organismsDiffer>false</organismsDiffer>
    <experiments>3</experiments>
</comment>
<comment type="interaction">
    <interactant intactId="EBI-10179682">
        <id>O00526</id>
    </interactant>
    <interactant intactId="EBI-12345267">
        <id>O15393-2</id>
        <label>TMPRSS2</label>
    </interactant>
    <organismsDiffer>false</organismsDiffer>
    <experiments>3</experiments>
</comment>
<comment type="interaction">
    <interactant intactId="EBI-10179682">
        <id>O00526</id>
    </interactant>
    <interactant intactId="EBI-7404021">
        <id>O14788</id>
        <label>TNFSF11</label>
    </interactant>
    <organismsDiffer>false</organismsDiffer>
    <experiments>3</experiments>
</comment>
<comment type="interaction">
    <interactant intactId="EBI-10179682">
        <id>O00526</id>
    </interactant>
    <interactant intactId="EBI-524131">
        <id>O43557</id>
        <label>TNFSF14</label>
    </interactant>
    <organismsDiffer>false</organismsDiffer>
    <experiments>3</experiments>
</comment>
<comment type="interaction">
    <interactant intactId="EBI-10179682">
        <id>O00526</id>
    </interactant>
    <interactant intactId="EBI-10243654">
        <id>Q5BVD1</id>
        <label>TTMP</label>
    </interactant>
    <organismsDiffer>false</organismsDiffer>
    <experiments>3</experiments>
</comment>
<comment type="interaction">
    <interactant intactId="EBI-10179682">
        <id>O00526</id>
    </interactant>
    <interactant intactId="EBI-2129267">
        <id>Q8WWF5</id>
        <label>ZNRF4</label>
    </interactant>
    <organismsDiffer>false</organismsDiffer>
    <experiments>3</experiments>
</comment>
<comment type="subcellular location">
    <subcellularLocation>
        <location evidence="4">Cell membrane</location>
        <topology evidence="4">Single-pass type I membrane protein</topology>
    </subcellularLocation>
    <text evidence="1">Heterodimer formation with UPK1A is a prerequisite to exit out of the endoplasmic reticulum (ER).</text>
</comment>
<comment type="tissue specificity">
    <text evidence="3">Expressed in ureter.</text>
</comment>
<comment type="similarity">
    <text evidence="4">Belongs to the uroplakin-2 family.</text>
</comment>
<reference key="1">
    <citation type="journal article" date="1998" name="Am. J. Pathol.">
        <title>Uroplakin gene expression by normal and neoplastic human urothelium.</title>
        <authorList>
            <person name="Lobban E.D."/>
            <person name="Smith B.A."/>
            <person name="Hall G.D."/>
            <person name="Harnden P."/>
            <person name="Roberts P."/>
            <person name="Selby P.J."/>
            <person name="Trejdosiewicz L.K."/>
            <person name="Southgate J."/>
        </authorList>
    </citation>
    <scope>NUCLEOTIDE SEQUENCE [MRNA]</scope>
    <scope>TISSUE SPECIFICITY</scope>
    <source>
        <tissue>Ureter</tissue>
    </source>
</reference>
<reference key="2">
    <citation type="submission" date="1998-08" db="EMBL/GenBank/DDBJ databases">
        <authorList>
            <person name="Smith B.A."/>
        </authorList>
    </citation>
    <scope>SEQUENCE REVISION TO 163</scope>
</reference>
<reference key="3">
    <citation type="journal article" date="2003" name="Oncol. Rep.">
        <title>Genetic detection for hematogenous micrometastasis in patients with various types of malignant tumors using Uroplakin II derived primers in polymerase chain reaction.</title>
        <authorList>
            <person name="Hirata H."/>
            <person name="Hisatomi H."/>
            <person name="Kawakita M."/>
            <person name="Nagao K."/>
            <person name="Yamamoto S."/>
            <person name="Hikiji K."/>
            <person name="Nakamoto T."/>
            <person name="Harasawa H."/>
            <person name="Kaneko N."/>
            <person name="Matsuda T."/>
            <person name="Yamamoto M."/>
            <person name="Kanamaru T."/>
        </authorList>
    </citation>
    <scope>NUCLEOTIDE SEQUENCE [GENOMIC DNA / MRNA]</scope>
</reference>
<reference key="4">
    <citation type="submission" date="2003-10" db="EMBL/GenBank/DDBJ databases">
        <title>Cloning of human uroplakin II gene from Chinese transitional cell carcinoma of bladder patients.</title>
        <authorList>
            <person name="Tong Q.S."/>
            <person name="Zheng L.D."/>
            <person name="Chen F.M."/>
            <person name="Zeng F.Q."/>
            <person name="Zhao J."/>
            <person name="Wang L."/>
            <person name="Lu G.C."/>
        </authorList>
    </citation>
    <scope>NUCLEOTIDE SEQUENCE [MRNA]</scope>
    <source>
        <tissue>Urinary bladder</tissue>
    </source>
</reference>
<reference key="5">
    <citation type="submission" date="2007-02" db="EMBL/GenBank/DDBJ databases">
        <authorList>
            <consortium name="NHLBI resequencing and genotyping service (RS&amp;G)"/>
        </authorList>
    </citation>
    <scope>NUCLEOTIDE SEQUENCE [GENOMIC DNA]</scope>
</reference>
<reference key="6">
    <citation type="journal article" date="2004" name="Genome Res.">
        <title>The status, quality, and expansion of the NIH full-length cDNA project: the Mammalian Gene Collection (MGC).</title>
        <authorList>
            <consortium name="The MGC Project Team"/>
        </authorList>
    </citation>
    <scope>NUCLEOTIDE SEQUENCE [LARGE SCALE MRNA]</scope>
</reference>
<reference key="7">
    <citation type="submission" date="1997-06" db="EMBL/GenBank/DDBJ databases">
        <authorList>
            <person name="Su S.L."/>
        </authorList>
    </citation>
    <scope>NUCLEOTIDE SEQUENCE [MRNA] OF 146-184</scope>
    <source>
        <tissue>Urinary bladder carcinoma</tissue>
    </source>
</reference>
<feature type="signal peptide" evidence="2">
    <location>
        <begin position="1"/>
        <end position="25"/>
    </location>
</feature>
<feature type="propeptide" id="PRO_0000022630" evidence="1">
    <location>
        <begin position="26"/>
        <end position="84"/>
    </location>
</feature>
<feature type="chain" id="PRO_0000022631" description="Uroplakin-2">
    <location>
        <begin position="85"/>
        <end position="184"/>
    </location>
</feature>
<feature type="topological domain" description="Lumenal" evidence="2">
    <location>
        <begin position="85"/>
        <end position="155"/>
    </location>
</feature>
<feature type="transmembrane region" description="Helical" evidence="2">
    <location>
        <begin position="156"/>
        <end position="176"/>
    </location>
</feature>
<feature type="topological domain" description="Cytoplasmic" evidence="2">
    <location>
        <begin position="177"/>
        <end position="184"/>
    </location>
</feature>
<feature type="glycosylation site" description="N-linked (GlcNAc...) asparagine" evidence="2">
    <location>
        <position position="28"/>
    </location>
</feature>
<feature type="glycosylation site" description="N-linked (GlcNAc...) asparagine" evidence="2">
    <location>
        <position position="57"/>
    </location>
</feature>
<feature type="glycosylation site" description="N-linked (GlcNAc...) asparagine" evidence="2">
    <location>
        <position position="66"/>
    </location>
</feature>
<feature type="sequence variant" id="VAR_051473" description="In dbSNP:rs3886020.">
    <original>A</original>
    <variation>S</variation>
    <location>
        <position position="47"/>
    </location>
</feature>
<feature type="sequence variant" id="VAR_062246" description="In dbSNP:rs45530531.">
    <original>T</original>
    <variation>M</variation>
    <location>
        <position position="160"/>
    </location>
</feature>
<feature type="sequence conflict" description="In Ref. 7; AAB58416." evidence="4" ref="7">
    <original>G</original>
    <variation>A</variation>
    <location>
        <position position="149"/>
    </location>
</feature>
<protein>
    <recommendedName>
        <fullName>Uroplakin-2</fullName>
        <shortName>UP2</shortName>
    </recommendedName>
    <alternativeName>
        <fullName>Uroplakin II</fullName>
        <shortName>UPII</shortName>
    </alternativeName>
</protein>
<sequence length="184" mass="19438">MAPLLPIRTLPLILILLALLSPGAADFNISSLSGLLSPALTESLLVALPPCHLTGGNATLMVRRANDSKVVTSSFVVPPCRGRRELVSVVDSGAGFTVTRLSAYQVTNLVPGTKFYISYLVKKGTATESSREIPMSTLPRRNMESIGLGMARTGGMVVITVLLSVAMFLLVLGFIIALALGSRK</sequence>
<dbReference type="EMBL" id="Y13645">
    <property type="protein sequence ID" value="CAA73996.1"/>
    <property type="molecule type" value="mRNA"/>
</dbReference>
<dbReference type="EMBL" id="AB078607">
    <property type="protein sequence ID" value="BAB84089.1"/>
    <property type="molecule type" value="Genomic_DNA"/>
</dbReference>
<dbReference type="EMBL" id="AY455312">
    <property type="protein sequence ID" value="AAR19396.1"/>
    <property type="molecule type" value="mRNA"/>
</dbReference>
<dbReference type="EMBL" id="EF445028">
    <property type="protein sequence ID" value="ACA06070.1"/>
    <property type="molecule type" value="Genomic_DNA"/>
</dbReference>
<dbReference type="EMBL" id="BC113900">
    <property type="protein sequence ID" value="AAI13901.1"/>
    <property type="molecule type" value="mRNA"/>
</dbReference>
<dbReference type="EMBL" id="AF000562">
    <property type="protein sequence ID" value="AAB58416.1"/>
    <property type="molecule type" value="mRNA"/>
</dbReference>
<dbReference type="CCDS" id="CCDS8404.1"/>
<dbReference type="PIR" id="T09609">
    <property type="entry name" value="T09609"/>
</dbReference>
<dbReference type="RefSeq" id="NP_006751.1">
    <property type="nucleotide sequence ID" value="NM_006760.4"/>
</dbReference>
<dbReference type="SMR" id="O00526"/>
<dbReference type="BioGRID" id="113225">
    <property type="interactions" value="166"/>
</dbReference>
<dbReference type="FunCoup" id="O00526">
    <property type="interactions" value="121"/>
</dbReference>
<dbReference type="IntAct" id="O00526">
    <property type="interactions" value="135"/>
</dbReference>
<dbReference type="STRING" id="9606.ENSP00000264031"/>
<dbReference type="TCDB" id="8.A.90.1.1">
    <property type="family name" value="the uroplakin 2/3 (upk2/3) family"/>
</dbReference>
<dbReference type="GlyCosmos" id="O00526">
    <property type="glycosylation" value="3 sites, No reported glycans"/>
</dbReference>
<dbReference type="GlyGen" id="O00526">
    <property type="glycosylation" value="3 sites"/>
</dbReference>
<dbReference type="iPTMnet" id="O00526"/>
<dbReference type="PhosphoSitePlus" id="O00526"/>
<dbReference type="BioMuta" id="UPK2"/>
<dbReference type="MassIVE" id="O00526"/>
<dbReference type="PaxDb" id="9606-ENSP00000264031"/>
<dbReference type="PeptideAtlas" id="O00526"/>
<dbReference type="ProteomicsDB" id="47956"/>
<dbReference type="TopDownProteomics" id="O00526"/>
<dbReference type="Antibodypedia" id="32551">
    <property type="antibodies" value="92 antibodies from 17 providers"/>
</dbReference>
<dbReference type="DNASU" id="7379"/>
<dbReference type="Ensembl" id="ENST00000264031.3">
    <property type="protein sequence ID" value="ENSP00000264031.2"/>
    <property type="gene ID" value="ENSG00000110375.3"/>
</dbReference>
<dbReference type="GeneID" id="7379"/>
<dbReference type="KEGG" id="hsa:7379"/>
<dbReference type="MANE-Select" id="ENST00000264031.3">
    <property type="protein sequence ID" value="ENSP00000264031.2"/>
    <property type="RefSeq nucleotide sequence ID" value="NM_006760.4"/>
    <property type="RefSeq protein sequence ID" value="NP_006751.1"/>
</dbReference>
<dbReference type="UCSC" id="uc001puh.4">
    <property type="organism name" value="human"/>
</dbReference>
<dbReference type="AGR" id="HGNC:12579"/>
<dbReference type="CTD" id="7379"/>
<dbReference type="DisGeNET" id="7379"/>
<dbReference type="GeneCards" id="UPK2"/>
<dbReference type="HGNC" id="HGNC:12579">
    <property type="gene designation" value="UPK2"/>
</dbReference>
<dbReference type="HPA" id="ENSG00000110375">
    <property type="expression patterns" value="Tissue enriched (urinary)"/>
</dbReference>
<dbReference type="MalaCards" id="UPK2"/>
<dbReference type="MIM" id="611558">
    <property type="type" value="gene"/>
</dbReference>
<dbReference type="neXtProt" id="NX_O00526"/>
<dbReference type="OpenTargets" id="ENSG00000110375"/>
<dbReference type="PharmGKB" id="PA37211"/>
<dbReference type="VEuPathDB" id="HostDB:ENSG00000110375"/>
<dbReference type="eggNOG" id="KOG2294">
    <property type="taxonomic scope" value="Eukaryota"/>
</dbReference>
<dbReference type="GeneTree" id="ENSGT00390000006115"/>
<dbReference type="HOGENOM" id="CLU_126065_0_0_1"/>
<dbReference type="InParanoid" id="O00526"/>
<dbReference type="OMA" id="SFMVPPC"/>
<dbReference type="OrthoDB" id="9947134at2759"/>
<dbReference type="PAN-GO" id="O00526">
    <property type="GO annotations" value="2 GO annotations based on evolutionary models"/>
</dbReference>
<dbReference type="PhylomeDB" id="O00526"/>
<dbReference type="TreeFam" id="TF337797"/>
<dbReference type="PathwayCommons" id="O00526"/>
<dbReference type="SignaLink" id="O00526"/>
<dbReference type="BioGRID-ORCS" id="7379">
    <property type="hits" value="8 hits in 1143 CRISPR screens"/>
</dbReference>
<dbReference type="GeneWiki" id="UPK2"/>
<dbReference type="GenomeRNAi" id="7379"/>
<dbReference type="Pharos" id="O00526">
    <property type="development level" value="Tbio"/>
</dbReference>
<dbReference type="PRO" id="PR:O00526"/>
<dbReference type="Proteomes" id="UP000005640">
    <property type="component" value="Chromosome 11"/>
</dbReference>
<dbReference type="RNAct" id="O00526">
    <property type="molecule type" value="protein"/>
</dbReference>
<dbReference type="Bgee" id="ENSG00000110375">
    <property type="expression patterns" value="Expressed in endometrium epithelium and 92 other cell types or tissues"/>
</dbReference>
<dbReference type="GO" id="GO:0016324">
    <property type="term" value="C:apical plasma membrane"/>
    <property type="evidence" value="ECO:0000318"/>
    <property type="project" value="GO_Central"/>
</dbReference>
<dbReference type="GO" id="GO:0070062">
    <property type="term" value="C:extracellular exosome"/>
    <property type="evidence" value="ECO:0007005"/>
    <property type="project" value="UniProtKB"/>
</dbReference>
<dbReference type="GO" id="GO:0005886">
    <property type="term" value="C:plasma membrane"/>
    <property type="evidence" value="ECO:0000304"/>
    <property type="project" value="ProtInc"/>
</dbReference>
<dbReference type="GO" id="GO:0030855">
    <property type="term" value="P:epithelial cell differentiation"/>
    <property type="evidence" value="ECO:0000314"/>
    <property type="project" value="UniProtKB"/>
</dbReference>
<dbReference type="CDD" id="cd09967">
    <property type="entry name" value="UP_II"/>
    <property type="match status" value="1"/>
</dbReference>
<dbReference type="InterPro" id="IPR009952">
    <property type="entry name" value="Uroplakin-2"/>
</dbReference>
<dbReference type="PANTHER" id="PTHR17573">
    <property type="entry name" value="UROPLAKIN II"/>
    <property type="match status" value="1"/>
</dbReference>
<dbReference type="PANTHER" id="PTHR17573:SF0">
    <property type="entry name" value="UROPLAKIN-2"/>
    <property type="match status" value="1"/>
</dbReference>
<dbReference type="Pfam" id="PF07353">
    <property type="entry name" value="Uroplakin_II"/>
    <property type="match status" value="1"/>
</dbReference>
<dbReference type="PIRSF" id="PIRSF016439">
    <property type="entry name" value="Uroplakin_II"/>
    <property type="match status" value="1"/>
</dbReference>